<dbReference type="EC" id="1.1.1.86" evidence="1"/>
<dbReference type="EMBL" id="AF220670">
    <property type="protein sequence ID" value="AAG39032.1"/>
    <property type="molecule type" value="Genomic_DNA"/>
</dbReference>
<dbReference type="RefSeq" id="WP_002952054.1">
    <property type="nucleotide sequence ID" value="NZ_WMLD01000010.1"/>
</dbReference>
<dbReference type="SMR" id="Q9F0I7"/>
<dbReference type="eggNOG" id="COG0059">
    <property type="taxonomic scope" value="Bacteria"/>
</dbReference>
<dbReference type="OMA" id="RAMFSWL"/>
<dbReference type="OrthoDB" id="9804088at2"/>
<dbReference type="UniPathway" id="UPA00047">
    <property type="reaction ID" value="UER00056"/>
</dbReference>
<dbReference type="UniPathway" id="UPA00049">
    <property type="reaction ID" value="UER00060"/>
</dbReference>
<dbReference type="GO" id="GO:0005829">
    <property type="term" value="C:cytosol"/>
    <property type="evidence" value="ECO:0007669"/>
    <property type="project" value="TreeGrafter"/>
</dbReference>
<dbReference type="GO" id="GO:0004455">
    <property type="term" value="F:ketol-acid reductoisomerase activity"/>
    <property type="evidence" value="ECO:0007669"/>
    <property type="project" value="UniProtKB-UniRule"/>
</dbReference>
<dbReference type="GO" id="GO:0000287">
    <property type="term" value="F:magnesium ion binding"/>
    <property type="evidence" value="ECO:0007669"/>
    <property type="project" value="UniProtKB-UniRule"/>
</dbReference>
<dbReference type="GO" id="GO:0050661">
    <property type="term" value="F:NADP binding"/>
    <property type="evidence" value="ECO:0007669"/>
    <property type="project" value="InterPro"/>
</dbReference>
<dbReference type="GO" id="GO:0009097">
    <property type="term" value="P:isoleucine biosynthetic process"/>
    <property type="evidence" value="ECO:0007669"/>
    <property type="project" value="UniProtKB-UniRule"/>
</dbReference>
<dbReference type="GO" id="GO:0009099">
    <property type="term" value="P:L-valine biosynthetic process"/>
    <property type="evidence" value="ECO:0007669"/>
    <property type="project" value="UniProtKB-UniRule"/>
</dbReference>
<dbReference type="FunFam" id="3.40.50.720:FF:000023">
    <property type="entry name" value="Ketol-acid reductoisomerase (NADP(+))"/>
    <property type="match status" value="1"/>
</dbReference>
<dbReference type="Gene3D" id="6.10.240.10">
    <property type="match status" value="1"/>
</dbReference>
<dbReference type="Gene3D" id="3.40.50.720">
    <property type="entry name" value="NAD(P)-binding Rossmann-like Domain"/>
    <property type="match status" value="1"/>
</dbReference>
<dbReference type="HAMAP" id="MF_00435">
    <property type="entry name" value="IlvC"/>
    <property type="match status" value="1"/>
</dbReference>
<dbReference type="InterPro" id="IPR008927">
    <property type="entry name" value="6-PGluconate_DH-like_C_sf"/>
</dbReference>
<dbReference type="InterPro" id="IPR013023">
    <property type="entry name" value="KARI"/>
</dbReference>
<dbReference type="InterPro" id="IPR000506">
    <property type="entry name" value="KARI_C"/>
</dbReference>
<dbReference type="InterPro" id="IPR013116">
    <property type="entry name" value="KARI_N"/>
</dbReference>
<dbReference type="InterPro" id="IPR014359">
    <property type="entry name" value="KARI_prok"/>
</dbReference>
<dbReference type="InterPro" id="IPR036291">
    <property type="entry name" value="NAD(P)-bd_dom_sf"/>
</dbReference>
<dbReference type="NCBIfam" id="TIGR00465">
    <property type="entry name" value="ilvC"/>
    <property type="match status" value="1"/>
</dbReference>
<dbReference type="NCBIfam" id="NF004017">
    <property type="entry name" value="PRK05479.1"/>
    <property type="match status" value="1"/>
</dbReference>
<dbReference type="NCBIfam" id="NF009940">
    <property type="entry name" value="PRK13403.1"/>
    <property type="match status" value="1"/>
</dbReference>
<dbReference type="PANTHER" id="PTHR21371">
    <property type="entry name" value="KETOL-ACID REDUCTOISOMERASE, MITOCHONDRIAL"/>
    <property type="match status" value="1"/>
</dbReference>
<dbReference type="PANTHER" id="PTHR21371:SF1">
    <property type="entry name" value="KETOL-ACID REDUCTOISOMERASE, MITOCHONDRIAL"/>
    <property type="match status" value="1"/>
</dbReference>
<dbReference type="Pfam" id="PF01450">
    <property type="entry name" value="KARI_C"/>
    <property type="match status" value="1"/>
</dbReference>
<dbReference type="Pfam" id="PF07991">
    <property type="entry name" value="KARI_N"/>
    <property type="match status" value="1"/>
</dbReference>
<dbReference type="PIRSF" id="PIRSF000116">
    <property type="entry name" value="IlvC_gammaproteo"/>
    <property type="match status" value="1"/>
</dbReference>
<dbReference type="SUPFAM" id="SSF48179">
    <property type="entry name" value="6-phosphogluconate dehydrogenase C-terminal domain-like"/>
    <property type="match status" value="1"/>
</dbReference>
<dbReference type="SUPFAM" id="SSF51735">
    <property type="entry name" value="NAD(P)-binding Rossmann-fold domains"/>
    <property type="match status" value="1"/>
</dbReference>
<dbReference type="PROSITE" id="PS51851">
    <property type="entry name" value="KARI_C"/>
    <property type="match status" value="1"/>
</dbReference>
<dbReference type="PROSITE" id="PS51850">
    <property type="entry name" value="KARI_N"/>
    <property type="match status" value="1"/>
</dbReference>
<reference key="1">
    <citation type="journal article" date="2000" name="Appl. Environ. Microbiol.">
        <title>Branched-chain amino acid biosynthesis is essential for optimal growth of Streptococcus thermophilus in milk.</title>
        <authorList>
            <person name="Garault P."/>
            <person name="Letort C."/>
            <person name="Juillard V."/>
            <person name="Monnet V."/>
        </authorList>
    </citation>
    <scope>NUCLEOTIDE SEQUENCE [GENOMIC DNA]</scope>
    <source>
        <strain>ST18</strain>
    </source>
</reference>
<protein>
    <recommendedName>
        <fullName evidence="1">Ketol-acid reductoisomerase (NADP(+))</fullName>
        <shortName evidence="1">KARI</shortName>
        <ecNumber evidence="1">1.1.1.86</ecNumber>
    </recommendedName>
    <alternativeName>
        <fullName evidence="1">Acetohydroxy-acid isomeroreductase</fullName>
        <shortName evidence="1">AHIR</shortName>
    </alternativeName>
    <alternativeName>
        <fullName evidence="1">Alpha-keto-beta-hydroxylacyl reductoisomerase</fullName>
    </alternativeName>
    <alternativeName>
        <fullName evidence="1">Ketol-acid reductoisomerase type 1</fullName>
    </alternativeName>
    <alternativeName>
        <fullName evidence="1">Ketol-acid reductoisomerase type I</fullName>
    </alternativeName>
</protein>
<keyword id="KW-0028">Amino-acid biosynthesis</keyword>
<keyword id="KW-0100">Branched-chain amino acid biosynthesis</keyword>
<keyword id="KW-0460">Magnesium</keyword>
<keyword id="KW-0479">Metal-binding</keyword>
<keyword id="KW-0521">NADP</keyword>
<keyword id="KW-0560">Oxidoreductase</keyword>
<proteinExistence type="inferred from homology"/>
<accession>Q9F0I7</accession>
<comment type="function">
    <text evidence="1">Involved in the biosynthesis of branched-chain amino acids (BCAA). Catalyzes an alkyl-migration followed by a ketol-acid reduction of (S)-2-acetolactate (S2AL) to yield (R)-2,3-dihydroxy-isovalerate. In the isomerase reaction, S2AL is rearranged via a Mg-dependent methyl migration to produce 3-hydroxy-3-methyl-2-ketobutyrate (HMKB). In the reductase reaction, this 2-ketoacid undergoes a metal-dependent reduction by NADPH to yield (R)-2,3-dihydroxy-isovalerate.</text>
</comment>
<comment type="catalytic activity">
    <reaction evidence="1">
        <text>(2R)-2,3-dihydroxy-3-methylbutanoate + NADP(+) = (2S)-2-acetolactate + NADPH + H(+)</text>
        <dbReference type="Rhea" id="RHEA:22068"/>
        <dbReference type="ChEBI" id="CHEBI:15378"/>
        <dbReference type="ChEBI" id="CHEBI:49072"/>
        <dbReference type="ChEBI" id="CHEBI:57783"/>
        <dbReference type="ChEBI" id="CHEBI:58349"/>
        <dbReference type="ChEBI" id="CHEBI:58476"/>
        <dbReference type="EC" id="1.1.1.86"/>
    </reaction>
</comment>
<comment type="catalytic activity">
    <reaction evidence="1">
        <text>(2R,3R)-2,3-dihydroxy-3-methylpentanoate + NADP(+) = (S)-2-ethyl-2-hydroxy-3-oxobutanoate + NADPH + H(+)</text>
        <dbReference type="Rhea" id="RHEA:13493"/>
        <dbReference type="ChEBI" id="CHEBI:15378"/>
        <dbReference type="ChEBI" id="CHEBI:49256"/>
        <dbReference type="ChEBI" id="CHEBI:49258"/>
        <dbReference type="ChEBI" id="CHEBI:57783"/>
        <dbReference type="ChEBI" id="CHEBI:58349"/>
        <dbReference type="EC" id="1.1.1.86"/>
    </reaction>
</comment>
<comment type="cofactor">
    <cofactor evidence="1">
        <name>Mg(2+)</name>
        <dbReference type="ChEBI" id="CHEBI:18420"/>
    </cofactor>
    <text evidence="1">Binds 2 magnesium ions per subunit.</text>
</comment>
<comment type="pathway">
    <text evidence="1">Amino-acid biosynthesis; L-isoleucine biosynthesis; L-isoleucine from 2-oxobutanoate: step 2/4.</text>
</comment>
<comment type="pathway">
    <text evidence="1">Amino-acid biosynthesis; L-valine biosynthesis; L-valine from pyruvate: step 2/4.</text>
</comment>
<comment type="similarity">
    <text evidence="1">Belongs to the ketol-acid reductoisomerase family.</text>
</comment>
<sequence length="340" mass="37371">MAVQMEYEKDVKVPALDGKKIAVIGYGSQGHAHSQNLRDTGHDVIIGVRPGKSFDKAKEDGFDTYTVAEATKLADVIMILAPDEIQQELYEAEIAPNLEAGNAVGFAHGFNIHFEFIKVPADVDVFMCAPKGPGHLVRRTFEEGFGVPALYAVYQDATGNAKDIAMDWCKGIGAARVGLLETTYKEETEEDLFGEQAVLCGGLTALIETGFEVLTEAGYAPELAYFEVLHEMKLIVDLIYEGGFKKMRQSISNTAEFGDYVSGPRVITEQVKENMKAVLADIQNGKFANDFVNDYKAGRPKLTAYREEAANLEIEKVGAELRKAMPFVGQNDDDAFKIYN</sequence>
<name>ILVC_STRTR</name>
<evidence type="ECO:0000255" key="1">
    <source>
        <dbReference type="HAMAP-Rule" id="MF_00435"/>
    </source>
</evidence>
<evidence type="ECO:0000255" key="2">
    <source>
        <dbReference type="PROSITE-ProRule" id="PRU01197"/>
    </source>
</evidence>
<evidence type="ECO:0000255" key="3">
    <source>
        <dbReference type="PROSITE-ProRule" id="PRU01198"/>
    </source>
</evidence>
<feature type="chain" id="PRO_0000151369" description="Ketol-acid reductoisomerase (NADP(+))">
    <location>
        <begin position="1"/>
        <end position="340"/>
    </location>
</feature>
<feature type="domain" description="KARI N-terminal Rossmann" evidence="2">
    <location>
        <begin position="3"/>
        <end position="182"/>
    </location>
</feature>
<feature type="domain" description="KARI C-terminal knotted" evidence="3">
    <location>
        <begin position="183"/>
        <end position="328"/>
    </location>
</feature>
<feature type="active site" evidence="1">
    <location>
        <position position="108"/>
    </location>
</feature>
<feature type="binding site" evidence="1">
    <location>
        <begin position="26"/>
        <end position="29"/>
    </location>
    <ligand>
        <name>NADP(+)</name>
        <dbReference type="ChEBI" id="CHEBI:58349"/>
    </ligand>
</feature>
<feature type="binding site" evidence="1">
    <location>
        <position position="49"/>
    </location>
    <ligand>
        <name>NADP(+)</name>
        <dbReference type="ChEBI" id="CHEBI:58349"/>
    </ligand>
</feature>
<feature type="binding site" evidence="1">
    <location>
        <position position="53"/>
    </location>
    <ligand>
        <name>NADP(+)</name>
        <dbReference type="ChEBI" id="CHEBI:58349"/>
    </ligand>
</feature>
<feature type="binding site" evidence="1">
    <location>
        <begin position="83"/>
        <end position="86"/>
    </location>
    <ligand>
        <name>NADP(+)</name>
        <dbReference type="ChEBI" id="CHEBI:58349"/>
    </ligand>
</feature>
<feature type="binding site" evidence="1">
    <location>
        <position position="134"/>
    </location>
    <ligand>
        <name>NADP(+)</name>
        <dbReference type="ChEBI" id="CHEBI:58349"/>
    </ligand>
</feature>
<feature type="binding site" evidence="1">
    <location>
        <position position="191"/>
    </location>
    <ligand>
        <name>Mg(2+)</name>
        <dbReference type="ChEBI" id="CHEBI:18420"/>
        <label>1</label>
    </ligand>
</feature>
<feature type="binding site" evidence="1">
    <location>
        <position position="191"/>
    </location>
    <ligand>
        <name>Mg(2+)</name>
        <dbReference type="ChEBI" id="CHEBI:18420"/>
        <label>2</label>
    </ligand>
</feature>
<feature type="binding site" evidence="1">
    <location>
        <position position="195"/>
    </location>
    <ligand>
        <name>Mg(2+)</name>
        <dbReference type="ChEBI" id="CHEBI:18420"/>
        <label>1</label>
    </ligand>
</feature>
<feature type="binding site" evidence="1">
    <location>
        <position position="227"/>
    </location>
    <ligand>
        <name>Mg(2+)</name>
        <dbReference type="ChEBI" id="CHEBI:18420"/>
        <label>2</label>
    </ligand>
</feature>
<feature type="binding site" evidence="1">
    <location>
        <position position="231"/>
    </location>
    <ligand>
        <name>Mg(2+)</name>
        <dbReference type="ChEBI" id="CHEBI:18420"/>
        <label>2</label>
    </ligand>
</feature>
<feature type="binding site" evidence="1">
    <location>
        <position position="252"/>
    </location>
    <ligand>
        <name>substrate</name>
    </ligand>
</feature>
<gene>
    <name evidence="1" type="primary">ilvC</name>
</gene>
<organism>
    <name type="scientific">Streptococcus thermophilus</name>
    <dbReference type="NCBI Taxonomy" id="1308"/>
    <lineage>
        <taxon>Bacteria</taxon>
        <taxon>Bacillati</taxon>
        <taxon>Bacillota</taxon>
        <taxon>Bacilli</taxon>
        <taxon>Lactobacillales</taxon>
        <taxon>Streptococcaceae</taxon>
        <taxon>Streptococcus</taxon>
    </lineage>
</organism>